<feature type="chain" id="PRO_1000019404" description="Cysteine desulfurase IscS">
    <location>
        <begin position="1"/>
        <end position="397"/>
    </location>
</feature>
<feature type="active site" description="Cysteine persulfide intermediate" evidence="1">
    <location>
        <position position="328"/>
    </location>
</feature>
<feature type="binding site" evidence="1">
    <location>
        <begin position="72"/>
        <end position="73"/>
    </location>
    <ligand>
        <name>pyridoxal 5'-phosphate</name>
        <dbReference type="ChEBI" id="CHEBI:597326"/>
    </ligand>
</feature>
<feature type="binding site" evidence="1">
    <location>
        <position position="152"/>
    </location>
    <ligand>
        <name>pyridoxal 5'-phosphate</name>
        <dbReference type="ChEBI" id="CHEBI:597326"/>
    </ligand>
</feature>
<feature type="binding site" evidence="1">
    <location>
        <position position="180"/>
    </location>
    <ligand>
        <name>pyridoxal 5'-phosphate</name>
        <dbReference type="ChEBI" id="CHEBI:597326"/>
    </ligand>
</feature>
<feature type="binding site" evidence="1">
    <location>
        <begin position="200"/>
        <end position="202"/>
    </location>
    <ligand>
        <name>pyridoxal 5'-phosphate</name>
        <dbReference type="ChEBI" id="CHEBI:597326"/>
    </ligand>
</feature>
<feature type="binding site" evidence="1">
    <location>
        <position position="238"/>
    </location>
    <ligand>
        <name>pyridoxal 5'-phosphate</name>
        <dbReference type="ChEBI" id="CHEBI:597326"/>
    </ligand>
</feature>
<feature type="binding site" description="via persulfide group" evidence="1">
    <location>
        <position position="328"/>
    </location>
    <ligand>
        <name>[2Fe-2S] cluster</name>
        <dbReference type="ChEBI" id="CHEBI:190135"/>
        <note>ligand shared with IscU</note>
    </ligand>
</feature>
<feature type="modified residue" description="N6-(pyridoxal phosphate)lysine" evidence="1">
    <location>
        <position position="203"/>
    </location>
</feature>
<reference key="1">
    <citation type="journal article" date="2007" name="PLoS ONE">
        <title>Analysis of the neurotoxin complex genes in Clostridium botulinum A1-A4 and B1 strains: BoNT/A3, /Ba4 and /B1 clusters are located within plasmids.</title>
        <authorList>
            <person name="Smith T.J."/>
            <person name="Hill K.K."/>
            <person name="Foley B.T."/>
            <person name="Detter J.C."/>
            <person name="Munk A.C."/>
            <person name="Bruce D.C."/>
            <person name="Doggett N.A."/>
            <person name="Smith L.A."/>
            <person name="Marks J.D."/>
            <person name="Xie G."/>
            <person name="Brettin T.S."/>
        </authorList>
    </citation>
    <scope>NUCLEOTIDE SEQUENCE [LARGE SCALE GENOMIC DNA]</scope>
    <source>
        <strain>ATCC 19397 / Type A</strain>
    </source>
</reference>
<name>ISCS_CLOB1</name>
<sequence length="397" mass="44107">MNKQVYMDYSATTYTKPEVLEEMLPFFTENFGNPSSLYSFSDKTKKAVNLARERVSKALNAEKNEIFFTSGGSEADNWAIKGIAYANKKKGNHIITTKIEHHAILHTAQFLEKEGFKVTYLPVDEEGFVSVEDIKNAITDETILVSVMFANNEIGTIEPIKEIGELCKEKNIYFHTDAVQAIGHVDIDVKDMNIDLLSMSAHKFYGPKGVGALYIKNGVKIQNLIHGGGQERGKRASTENTAGIVGLGKAIELAMENMPEENEKLSNLRGRLIRGIEARIPEVKLNGPKDMSRRLPNNVNFSFIGIEGETLLLDLDMNGIFGSTGSACASASLDPSHVLLSIGLPHETAHGSLRLSLGAKNTEEDIDYVLEVLPKIIKQRREMSPLWEDYMKNKEEK</sequence>
<organism>
    <name type="scientific">Clostridium botulinum (strain ATCC 19397 / Type A)</name>
    <dbReference type="NCBI Taxonomy" id="441770"/>
    <lineage>
        <taxon>Bacteria</taxon>
        <taxon>Bacillati</taxon>
        <taxon>Bacillota</taxon>
        <taxon>Clostridia</taxon>
        <taxon>Eubacteriales</taxon>
        <taxon>Clostridiaceae</taxon>
        <taxon>Clostridium</taxon>
    </lineage>
</organism>
<accession>A7FWJ9</accession>
<proteinExistence type="inferred from homology"/>
<comment type="function">
    <text evidence="1">Master enzyme that delivers sulfur to a number of partners involved in Fe-S cluster assembly, tRNA modification or cofactor biosynthesis. Catalyzes the removal of elemental sulfur atoms from cysteine to produce alanine. Functions as a sulfur delivery protein for Fe-S cluster synthesis onto IscU, an Fe-S scaffold assembly protein, as well as other S acceptor proteins.</text>
</comment>
<comment type="catalytic activity">
    <reaction evidence="1">
        <text>(sulfur carrier)-H + L-cysteine = (sulfur carrier)-SH + L-alanine</text>
        <dbReference type="Rhea" id="RHEA:43892"/>
        <dbReference type="Rhea" id="RHEA-COMP:14737"/>
        <dbReference type="Rhea" id="RHEA-COMP:14739"/>
        <dbReference type="ChEBI" id="CHEBI:29917"/>
        <dbReference type="ChEBI" id="CHEBI:35235"/>
        <dbReference type="ChEBI" id="CHEBI:57972"/>
        <dbReference type="ChEBI" id="CHEBI:64428"/>
        <dbReference type="EC" id="2.8.1.7"/>
    </reaction>
</comment>
<comment type="cofactor">
    <cofactor evidence="1">
        <name>pyridoxal 5'-phosphate</name>
        <dbReference type="ChEBI" id="CHEBI:597326"/>
    </cofactor>
</comment>
<comment type="pathway">
    <text evidence="1">Cofactor biosynthesis; iron-sulfur cluster biosynthesis.</text>
</comment>
<comment type="subunit">
    <text evidence="1">Homodimer. Forms a heterotetramer with IscU, interacts with other sulfur acceptors.</text>
</comment>
<comment type="subcellular location">
    <subcellularLocation>
        <location evidence="1">Cytoplasm</location>
    </subcellularLocation>
</comment>
<comment type="similarity">
    <text evidence="1">Belongs to the class-V pyridoxal-phosphate-dependent aminotransferase family. NifS/IscS subfamily.</text>
</comment>
<keyword id="KW-0001">2Fe-2S</keyword>
<keyword id="KW-0963">Cytoplasm</keyword>
<keyword id="KW-0408">Iron</keyword>
<keyword id="KW-0411">Iron-sulfur</keyword>
<keyword id="KW-0479">Metal-binding</keyword>
<keyword id="KW-0663">Pyridoxal phosphate</keyword>
<keyword id="KW-0808">Transferase</keyword>
<dbReference type="EC" id="2.8.1.7" evidence="1"/>
<dbReference type="EMBL" id="CP000726">
    <property type="protein sequence ID" value="ABS34137.1"/>
    <property type="molecule type" value="Genomic_DNA"/>
</dbReference>
<dbReference type="SMR" id="A7FWJ9"/>
<dbReference type="KEGG" id="cba:CLB_2509"/>
<dbReference type="HOGENOM" id="CLU_003433_0_0_9"/>
<dbReference type="UniPathway" id="UPA00266"/>
<dbReference type="GO" id="GO:1990221">
    <property type="term" value="C:L-cysteine desulfurase complex"/>
    <property type="evidence" value="ECO:0007669"/>
    <property type="project" value="UniProtKB-ARBA"/>
</dbReference>
<dbReference type="GO" id="GO:0051537">
    <property type="term" value="F:2 iron, 2 sulfur cluster binding"/>
    <property type="evidence" value="ECO:0007669"/>
    <property type="project" value="UniProtKB-UniRule"/>
</dbReference>
<dbReference type="GO" id="GO:0031071">
    <property type="term" value="F:cysteine desulfurase activity"/>
    <property type="evidence" value="ECO:0007669"/>
    <property type="project" value="UniProtKB-UniRule"/>
</dbReference>
<dbReference type="GO" id="GO:0046872">
    <property type="term" value="F:metal ion binding"/>
    <property type="evidence" value="ECO:0007669"/>
    <property type="project" value="UniProtKB-KW"/>
</dbReference>
<dbReference type="GO" id="GO:0030170">
    <property type="term" value="F:pyridoxal phosphate binding"/>
    <property type="evidence" value="ECO:0007669"/>
    <property type="project" value="UniProtKB-UniRule"/>
</dbReference>
<dbReference type="GO" id="GO:0044571">
    <property type="term" value="P:[2Fe-2S] cluster assembly"/>
    <property type="evidence" value="ECO:0007669"/>
    <property type="project" value="UniProtKB-UniRule"/>
</dbReference>
<dbReference type="GO" id="GO:0006520">
    <property type="term" value="P:amino acid metabolic process"/>
    <property type="evidence" value="ECO:0007669"/>
    <property type="project" value="InterPro"/>
</dbReference>
<dbReference type="FunFam" id="3.40.640.10:FF:000003">
    <property type="entry name" value="Cysteine desulfurase IscS"/>
    <property type="match status" value="1"/>
</dbReference>
<dbReference type="Gene3D" id="1.10.260.50">
    <property type="match status" value="1"/>
</dbReference>
<dbReference type="Gene3D" id="3.90.1150.10">
    <property type="entry name" value="Aspartate Aminotransferase, domain 1"/>
    <property type="match status" value="1"/>
</dbReference>
<dbReference type="Gene3D" id="3.40.640.10">
    <property type="entry name" value="Type I PLP-dependent aspartate aminotransferase-like (Major domain)"/>
    <property type="match status" value="1"/>
</dbReference>
<dbReference type="HAMAP" id="MF_00331">
    <property type="entry name" value="Cys_desulf_IscS"/>
    <property type="match status" value="1"/>
</dbReference>
<dbReference type="InterPro" id="IPR000192">
    <property type="entry name" value="Aminotrans_V_dom"/>
</dbReference>
<dbReference type="InterPro" id="IPR020578">
    <property type="entry name" value="Aminotrans_V_PyrdxlP_BS"/>
</dbReference>
<dbReference type="InterPro" id="IPR010240">
    <property type="entry name" value="Cys_deSase_IscS"/>
</dbReference>
<dbReference type="InterPro" id="IPR017772">
    <property type="entry name" value="Cys_deSase_NifS_bac/arc"/>
</dbReference>
<dbReference type="InterPro" id="IPR016454">
    <property type="entry name" value="Cysteine_dSase"/>
</dbReference>
<dbReference type="InterPro" id="IPR015424">
    <property type="entry name" value="PyrdxlP-dep_Trfase"/>
</dbReference>
<dbReference type="InterPro" id="IPR015421">
    <property type="entry name" value="PyrdxlP-dep_Trfase_major"/>
</dbReference>
<dbReference type="InterPro" id="IPR015422">
    <property type="entry name" value="PyrdxlP-dep_Trfase_small"/>
</dbReference>
<dbReference type="NCBIfam" id="TIGR03402">
    <property type="entry name" value="FeS_nifS"/>
    <property type="match status" value="1"/>
</dbReference>
<dbReference type="NCBIfam" id="NF002806">
    <property type="entry name" value="PRK02948.1"/>
    <property type="match status" value="1"/>
</dbReference>
<dbReference type="PANTHER" id="PTHR11601:SF34">
    <property type="entry name" value="CYSTEINE DESULFURASE"/>
    <property type="match status" value="1"/>
</dbReference>
<dbReference type="PANTHER" id="PTHR11601">
    <property type="entry name" value="CYSTEINE DESULFURYLASE FAMILY MEMBER"/>
    <property type="match status" value="1"/>
</dbReference>
<dbReference type="Pfam" id="PF00266">
    <property type="entry name" value="Aminotran_5"/>
    <property type="match status" value="1"/>
</dbReference>
<dbReference type="PIRSF" id="PIRSF005572">
    <property type="entry name" value="NifS"/>
    <property type="match status" value="1"/>
</dbReference>
<dbReference type="SUPFAM" id="SSF53383">
    <property type="entry name" value="PLP-dependent transferases"/>
    <property type="match status" value="1"/>
</dbReference>
<dbReference type="PROSITE" id="PS00595">
    <property type="entry name" value="AA_TRANSFER_CLASS_5"/>
    <property type="match status" value="1"/>
</dbReference>
<evidence type="ECO:0000255" key="1">
    <source>
        <dbReference type="HAMAP-Rule" id="MF_00331"/>
    </source>
</evidence>
<gene>
    <name evidence="1" type="primary">iscS</name>
    <name type="ordered locus">CLB_2509</name>
</gene>
<protein>
    <recommendedName>
        <fullName evidence="1">Cysteine desulfurase IscS</fullName>
        <ecNumber evidence="1">2.8.1.7</ecNumber>
    </recommendedName>
</protein>